<evidence type="ECO:0000255" key="1">
    <source>
        <dbReference type="HAMAP-Rule" id="MF_00051"/>
    </source>
</evidence>
<gene>
    <name evidence="1" type="primary">glyA</name>
    <name type="ordered locus">PA0172</name>
</gene>
<organism>
    <name type="scientific">Phytoplasma australiense</name>
    <dbReference type="NCBI Taxonomy" id="59748"/>
    <lineage>
        <taxon>Bacteria</taxon>
        <taxon>Bacillati</taxon>
        <taxon>Mycoplasmatota</taxon>
        <taxon>Mollicutes</taxon>
        <taxon>Acholeplasmatales</taxon>
        <taxon>Acholeplasmataceae</taxon>
        <taxon>Candidatus Phytoplasma</taxon>
        <taxon>16SrXII (Stolbur group)</taxon>
    </lineage>
</organism>
<reference key="1">
    <citation type="journal article" date="2008" name="J. Bacteriol.">
        <title>Comparative genome analysis of 'Candidatus Phytoplasma australiense' (subgroup tuf-Australia I; rp-A) and 'Ca. Phytoplasma asteris' strains OY-M and AY-WB.</title>
        <authorList>
            <person name="Tran-Nguyen L.T."/>
            <person name="Kube M."/>
            <person name="Schneider B."/>
            <person name="Reinhardt R."/>
            <person name="Gibb K.S."/>
        </authorList>
    </citation>
    <scope>NUCLEOTIDE SEQUENCE [LARGE SCALE GENOMIC DNA]</scope>
</reference>
<keyword id="KW-0028">Amino-acid biosynthesis</keyword>
<keyword id="KW-0963">Cytoplasm</keyword>
<keyword id="KW-0554">One-carbon metabolism</keyword>
<keyword id="KW-0663">Pyridoxal phosphate</keyword>
<keyword id="KW-1185">Reference proteome</keyword>
<keyword id="KW-0808">Transferase</keyword>
<comment type="function">
    <text evidence="1">Catalyzes the reversible interconversion of serine and glycine with tetrahydrofolate (THF) serving as the one-carbon carrier. This reaction serves as the major source of one-carbon groups required for the biosynthesis of purines, thymidylate, methionine, and other important biomolecules. Also exhibits THF-independent aldolase activity toward beta-hydroxyamino acids, producing glycine and aldehydes, via a retro-aldol mechanism.</text>
</comment>
<comment type="catalytic activity">
    <reaction evidence="1">
        <text>(6R)-5,10-methylene-5,6,7,8-tetrahydrofolate + glycine + H2O = (6S)-5,6,7,8-tetrahydrofolate + L-serine</text>
        <dbReference type="Rhea" id="RHEA:15481"/>
        <dbReference type="ChEBI" id="CHEBI:15377"/>
        <dbReference type="ChEBI" id="CHEBI:15636"/>
        <dbReference type="ChEBI" id="CHEBI:33384"/>
        <dbReference type="ChEBI" id="CHEBI:57305"/>
        <dbReference type="ChEBI" id="CHEBI:57453"/>
        <dbReference type="EC" id="2.1.2.1"/>
    </reaction>
</comment>
<comment type="cofactor">
    <cofactor evidence="1">
        <name>pyridoxal 5'-phosphate</name>
        <dbReference type="ChEBI" id="CHEBI:597326"/>
    </cofactor>
</comment>
<comment type="pathway">
    <text evidence="1">One-carbon metabolism; tetrahydrofolate interconversion.</text>
</comment>
<comment type="pathway">
    <text evidence="1">Amino-acid biosynthesis; glycine biosynthesis; glycine from L-serine: step 1/1.</text>
</comment>
<comment type="subunit">
    <text evidence="1">Homodimer.</text>
</comment>
<comment type="subcellular location">
    <subcellularLocation>
        <location evidence="1">Cytoplasm</location>
    </subcellularLocation>
</comment>
<comment type="similarity">
    <text evidence="1">Belongs to the SHMT family.</text>
</comment>
<name>GLYA_PHYAS</name>
<accession>B1V975</accession>
<protein>
    <recommendedName>
        <fullName evidence="1">Serine hydroxymethyltransferase</fullName>
        <shortName evidence="1">SHMT</shortName>
        <shortName evidence="1">Serine methylase</shortName>
        <ecNumber evidence="1">2.1.2.1</ecNumber>
    </recommendedName>
</protein>
<feature type="chain" id="PRO_1000116834" description="Serine hydroxymethyltransferase">
    <location>
        <begin position="1"/>
        <end position="413"/>
    </location>
</feature>
<feature type="binding site" evidence="1">
    <location>
        <position position="118"/>
    </location>
    <ligand>
        <name>(6S)-5,6,7,8-tetrahydrofolate</name>
        <dbReference type="ChEBI" id="CHEBI:57453"/>
    </ligand>
</feature>
<feature type="binding site" evidence="1">
    <location>
        <begin position="122"/>
        <end position="124"/>
    </location>
    <ligand>
        <name>(6S)-5,6,7,8-tetrahydrofolate</name>
        <dbReference type="ChEBI" id="CHEBI:57453"/>
    </ligand>
</feature>
<feature type="site" description="Plays an important role in substrate specificity" evidence="1">
    <location>
        <position position="227"/>
    </location>
</feature>
<feature type="modified residue" description="N6-(pyridoxal phosphate)lysine" evidence="1">
    <location>
        <position position="228"/>
    </location>
</feature>
<sequence length="413" mass="46630">MKSQLSLKDPKIFELIEQEKKRQKENIILIASENFVSKEVLETQGSILTNKYAEGYPGKRYYHGCGNVDDIEQIAIERAKKLFNARYANVQPHSGSQANMAVLQALLQPNDKILSLSLNDGGHLTHGHKLSFSGKYYQSYSYNVDPTTEMLDYESIRKLALEIKPKLIIAGYSAYSRKINFQKFREIANEVNAYLMADIAHIAGFVACKLHPCPLEAQADIVTSTTHKTLRGPRGGLILTNKEKIMQQINRSVFPGIQGGPLMHVIAAKAVSFKEAQSLEFKNYQQQVIKNAQAFAQTFQKKGYHVVSQGTDNHLFLINLKKTNPLFTGEKIANILEKVNIIVNKNTIPFDQEKPMFTSGIRLGTPAMTTKGFQEADFIKLADLIDQAIKNRDDNVYLQKIKKEVLDWTNDFK</sequence>
<proteinExistence type="inferred from homology"/>
<dbReference type="EC" id="2.1.2.1" evidence="1"/>
<dbReference type="EMBL" id="AM422018">
    <property type="protein sequence ID" value="CAM11507.1"/>
    <property type="molecule type" value="Genomic_DNA"/>
</dbReference>
<dbReference type="SMR" id="B1V975"/>
<dbReference type="STRING" id="59748.PA0172"/>
<dbReference type="KEGG" id="pal:PA0172"/>
<dbReference type="eggNOG" id="COG0112">
    <property type="taxonomic scope" value="Bacteria"/>
</dbReference>
<dbReference type="UniPathway" id="UPA00193"/>
<dbReference type="UniPathway" id="UPA00288">
    <property type="reaction ID" value="UER01023"/>
</dbReference>
<dbReference type="Proteomes" id="UP000008323">
    <property type="component" value="Chromosome"/>
</dbReference>
<dbReference type="GO" id="GO:0005829">
    <property type="term" value="C:cytosol"/>
    <property type="evidence" value="ECO:0007669"/>
    <property type="project" value="TreeGrafter"/>
</dbReference>
<dbReference type="GO" id="GO:0004372">
    <property type="term" value="F:glycine hydroxymethyltransferase activity"/>
    <property type="evidence" value="ECO:0007669"/>
    <property type="project" value="UniProtKB-UniRule"/>
</dbReference>
<dbReference type="GO" id="GO:0030170">
    <property type="term" value="F:pyridoxal phosphate binding"/>
    <property type="evidence" value="ECO:0007669"/>
    <property type="project" value="UniProtKB-UniRule"/>
</dbReference>
<dbReference type="GO" id="GO:0019264">
    <property type="term" value="P:glycine biosynthetic process from serine"/>
    <property type="evidence" value="ECO:0007669"/>
    <property type="project" value="UniProtKB-UniRule"/>
</dbReference>
<dbReference type="GO" id="GO:0035999">
    <property type="term" value="P:tetrahydrofolate interconversion"/>
    <property type="evidence" value="ECO:0007669"/>
    <property type="project" value="UniProtKB-UniRule"/>
</dbReference>
<dbReference type="CDD" id="cd00378">
    <property type="entry name" value="SHMT"/>
    <property type="match status" value="1"/>
</dbReference>
<dbReference type="FunFam" id="3.40.640.10:FF:000001">
    <property type="entry name" value="Serine hydroxymethyltransferase"/>
    <property type="match status" value="1"/>
</dbReference>
<dbReference type="Gene3D" id="3.90.1150.10">
    <property type="entry name" value="Aspartate Aminotransferase, domain 1"/>
    <property type="match status" value="1"/>
</dbReference>
<dbReference type="Gene3D" id="3.40.640.10">
    <property type="entry name" value="Type I PLP-dependent aspartate aminotransferase-like (Major domain)"/>
    <property type="match status" value="1"/>
</dbReference>
<dbReference type="HAMAP" id="MF_00051">
    <property type="entry name" value="SHMT"/>
    <property type="match status" value="1"/>
</dbReference>
<dbReference type="InterPro" id="IPR015424">
    <property type="entry name" value="PyrdxlP-dep_Trfase"/>
</dbReference>
<dbReference type="InterPro" id="IPR015421">
    <property type="entry name" value="PyrdxlP-dep_Trfase_major"/>
</dbReference>
<dbReference type="InterPro" id="IPR015422">
    <property type="entry name" value="PyrdxlP-dep_Trfase_small"/>
</dbReference>
<dbReference type="InterPro" id="IPR001085">
    <property type="entry name" value="Ser_HO-MeTrfase"/>
</dbReference>
<dbReference type="InterPro" id="IPR049943">
    <property type="entry name" value="Ser_HO-MeTrfase-like"/>
</dbReference>
<dbReference type="InterPro" id="IPR019798">
    <property type="entry name" value="Ser_HO-MeTrfase_PLP_BS"/>
</dbReference>
<dbReference type="InterPro" id="IPR039429">
    <property type="entry name" value="SHMT-like_dom"/>
</dbReference>
<dbReference type="NCBIfam" id="NF000586">
    <property type="entry name" value="PRK00011.1"/>
    <property type="match status" value="1"/>
</dbReference>
<dbReference type="PANTHER" id="PTHR11680">
    <property type="entry name" value="SERINE HYDROXYMETHYLTRANSFERASE"/>
    <property type="match status" value="1"/>
</dbReference>
<dbReference type="PANTHER" id="PTHR11680:SF35">
    <property type="entry name" value="SERINE HYDROXYMETHYLTRANSFERASE 1"/>
    <property type="match status" value="1"/>
</dbReference>
<dbReference type="Pfam" id="PF00464">
    <property type="entry name" value="SHMT"/>
    <property type="match status" value="1"/>
</dbReference>
<dbReference type="PIRSF" id="PIRSF000412">
    <property type="entry name" value="SHMT"/>
    <property type="match status" value="1"/>
</dbReference>
<dbReference type="SUPFAM" id="SSF53383">
    <property type="entry name" value="PLP-dependent transferases"/>
    <property type="match status" value="1"/>
</dbReference>
<dbReference type="PROSITE" id="PS00096">
    <property type="entry name" value="SHMT"/>
    <property type="match status" value="1"/>
</dbReference>